<dbReference type="EMBL" id="M10124">
    <property type="protein sequence ID" value="AAA84678.1"/>
    <property type="molecule type" value="Genomic_DNA"/>
</dbReference>
<dbReference type="EMBL" id="Z00044">
    <property type="protein sequence ID" value="CAA77343.1"/>
    <property type="molecule type" value="Genomic_DNA"/>
</dbReference>
<dbReference type="PIR" id="A01045">
    <property type="entry name" value="LWNTA"/>
</dbReference>
<dbReference type="RefSeq" id="NP_054483.1">
    <property type="nucleotide sequence ID" value="NC_001879.2"/>
</dbReference>
<dbReference type="SMR" id="P06286"/>
<dbReference type="GeneID" id="800475"/>
<dbReference type="KEGG" id="nta:800475"/>
<dbReference type="OMA" id="QPELMNE"/>
<dbReference type="OrthoDB" id="438052at2759"/>
<dbReference type="Proteomes" id="UP000084051">
    <property type="component" value="Unplaced"/>
</dbReference>
<dbReference type="GO" id="GO:0009535">
    <property type="term" value="C:chloroplast thylakoid membrane"/>
    <property type="evidence" value="ECO:0007669"/>
    <property type="project" value="UniProtKB-SubCell"/>
</dbReference>
<dbReference type="GO" id="GO:0045259">
    <property type="term" value="C:proton-transporting ATP synthase complex"/>
    <property type="evidence" value="ECO:0007669"/>
    <property type="project" value="UniProtKB-KW"/>
</dbReference>
<dbReference type="GO" id="GO:0033177">
    <property type="term" value="C:proton-transporting two-sector ATPase complex, proton-transporting domain"/>
    <property type="evidence" value="ECO:0007669"/>
    <property type="project" value="InterPro"/>
</dbReference>
<dbReference type="GO" id="GO:0008289">
    <property type="term" value="F:lipid binding"/>
    <property type="evidence" value="ECO:0007669"/>
    <property type="project" value="UniProtKB-KW"/>
</dbReference>
<dbReference type="GO" id="GO:0046933">
    <property type="term" value="F:proton-transporting ATP synthase activity, rotational mechanism"/>
    <property type="evidence" value="ECO:0007669"/>
    <property type="project" value="UniProtKB-UniRule"/>
</dbReference>
<dbReference type="CDD" id="cd18183">
    <property type="entry name" value="ATP-synt_Fo_c_ATPH"/>
    <property type="match status" value="1"/>
</dbReference>
<dbReference type="FunFam" id="1.20.20.10:FF:000001">
    <property type="entry name" value="ATP synthase subunit c, chloroplastic"/>
    <property type="match status" value="1"/>
</dbReference>
<dbReference type="Gene3D" id="1.20.20.10">
    <property type="entry name" value="F1F0 ATP synthase subunit C"/>
    <property type="match status" value="1"/>
</dbReference>
<dbReference type="HAMAP" id="MF_01396">
    <property type="entry name" value="ATP_synth_c_bact"/>
    <property type="match status" value="1"/>
</dbReference>
<dbReference type="InterPro" id="IPR005953">
    <property type="entry name" value="ATP_synth_csu_bac/chlpt"/>
</dbReference>
<dbReference type="InterPro" id="IPR000454">
    <property type="entry name" value="ATP_synth_F0_csu"/>
</dbReference>
<dbReference type="InterPro" id="IPR020537">
    <property type="entry name" value="ATP_synth_F0_csu_DDCD_BS"/>
</dbReference>
<dbReference type="InterPro" id="IPR038662">
    <property type="entry name" value="ATP_synth_F0_csu_sf"/>
</dbReference>
<dbReference type="InterPro" id="IPR002379">
    <property type="entry name" value="ATPase_proteolipid_c-like_dom"/>
</dbReference>
<dbReference type="InterPro" id="IPR035921">
    <property type="entry name" value="F/V-ATP_Csub_sf"/>
</dbReference>
<dbReference type="NCBIfam" id="TIGR01260">
    <property type="entry name" value="ATP_synt_c"/>
    <property type="match status" value="1"/>
</dbReference>
<dbReference type="NCBIfam" id="NF005608">
    <property type="entry name" value="PRK07354.1"/>
    <property type="match status" value="1"/>
</dbReference>
<dbReference type="PANTHER" id="PTHR10031">
    <property type="entry name" value="ATP SYNTHASE LIPID-BINDING PROTEIN, MITOCHONDRIAL"/>
    <property type="match status" value="1"/>
</dbReference>
<dbReference type="PANTHER" id="PTHR10031:SF0">
    <property type="entry name" value="ATPASE PROTEIN 9"/>
    <property type="match status" value="1"/>
</dbReference>
<dbReference type="Pfam" id="PF00137">
    <property type="entry name" value="ATP-synt_C"/>
    <property type="match status" value="1"/>
</dbReference>
<dbReference type="PRINTS" id="PR00124">
    <property type="entry name" value="ATPASEC"/>
</dbReference>
<dbReference type="SUPFAM" id="SSF81333">
    <property type="entry name" value="F1F0 ATP synthase subunit C"/>
    <property type="match status" value="1"/>
</dbReference>
<dbReference type="PROSITE" id="PS00605">
    <property type="entry name" value="ATPASE_C"/>
    <property type="match status" value="1"/>
</dbReference>
<protein>
    <recommendedName>
        <fullName evidence="1">ATP synthase subunit c, chloroplastic</fullName>
    </recommendedName>
    <alternativeName>
        <fullName evidence="1">ATP synthase F(0) sector subunit c</fullName>
    </alternativeName>
    <alternativeName>
        <fullName evidence="1">ATPase subunit III</fullName>
    </alternativeName>
    <alternativeName>
        <fullName evidence="1">F-type ATPase subunit c</fullName>
        <shortName evidence="1">F-ATPase subunit c</shortName>
    </alternativeName>
    <alternativeName>
        <fullName evidence="1">Lipid-binding protein</fullName>
    </alternativeName>
</protein>
<organism>
    <name type="scientific">Nicotiana tabacum</name>
    <name type="common">Common tobacco</name>
    <dbReference type="NCBI Taxonomy" id="4097"/>
    <lineage>
        <taxon>Eukaryota</taxon>
        <taxon>Viridiplantae</taxon>
        <taxon>Streptophyta</taxon>
        <taxon>Embryophyta</taxon>
        <taxon>Tracheophyta</taxon>
        <taxon>Spermatophyta</taxon>
        <taxon>Magnoliopsida</taxon>
        <taxon>eudicotyledons</taxon>
        <taxon>Gunneridae</taxon>
        <taxon>Pentapetalae</taxon>
        <taxon>asterids</taxon>
        <taxon>lamiids</taxon>
        <taxon>Solanales</taxon>
        <taxon>Solanaceae</taxon>
        <taxon>Nicotianoideae</taxon>
        <taxon>Nicotianeae</taxon>
        <taxon>Nicotiana</taxon>
    </lineage>
</organism>
<reference key="1">
    <citation type="journal article" date="1984" name="Gene">
        <title>Structure and transcription pattern of a tobacco chloroplast gene coding for subunit III of proton-translocating ATPase.</title>
        <authorList>
            <person name="Deno H."/>
            <person name="Shinozaki K."/>
            <person name="Sugiura M."/>
        </authorList>
    </citation>
    <scope>NUCLEOTIDE SEQUENCE [GENOMIC DNA]</scope>
    <source>
        <strain>cv. Bright Yellow 4</strain>
    </source>
</reference>
<reference key="2">
    <citation type="journal article" date="1986" name="EMBO J.">
        <title>The complete nucleotide sequence of the tobacco chloroplast genome: its gene organization and expression.</title>
        <authorList>
            <person name="Shinozaki K."/>
            <person name="Ohme M."/>
            <person name="Tanaka M."/>
            <person name="Wakasugi T."/>
            <person name="Hayashida N."/>
            <person name="Matsubayashi T."/>
            <person name="Zaita N."/>
            <person name="Chunwongse J."/>
            <person name="Obokata J."/>
            <person name="Yamaguchi-Shinozaki K."/>
            <person name="Ohto C."/>
            <person name="Torazawa K."/>
            <person name="Meng B.-Y."/>
            <person name="Sugita M."/>
            <person name="Deno H."/>
            <person name="Kamogashira T."/>
            <person name="Yamada K."/>
            <person name="Kusuda J."/>
            <person name="Takaiwa F."/>
            <person name="Kato A."/>
            <person name="Tohdoh N."/>
            <person name="Shimada H."/>
            <person name="Sugiura M."/>
        </authorList>
    </citation>
    <scope>NUCLEOTIDE SEQUENCE [LARGE SCALE GENOMIC DNA]</scope>
    <source>
        <strain>cv. Bright Yellow 4</strain>
    </source>
</reference>
<proteinExistence type="inferred from homology"/>
<comment type="function">
    <text evidence="1">F(1)F(0) ATP synthase produces ATP from ADP in the presence of a proton or sodium gradient. F-type ATPases consist of two structural domains, F(1) containing the extramembraneous catalytic core and F(0) containing the membrane proton channel, linked together by a central stalk and a peripheral stalk. During catalysis, ATP synthesis in the catalytic domain of F(1) is coupled via a rotary mechanism of the central stalk subunits to proton translocation.</text>
</comment>
<comment type="function">
    <text evidence="1">Key component of the F(0) channel; it plays a direct role in translocation across the membrane. A homomeric c-ring of between 10-14 subunits forms the central stalk rotor element with the F(1) delta and epsilon subunits.</text>
</comment>
<comment type="subunit">
    <text evidence="1">F-type ATPases have 2 components, F(1) - the catalytic core - and F(0) - the membrane proton channel. F(1) has five subunits: alpha(3), beta(3), gamma(1), delta(1), epsilon(1). F(0) has four main subunits: a(1), b(1), b'(1) and c(10-14). The alpha and beta chains form an alternating ring which encloses part of the gamma chain. F(1) is attached to F(0) by a central stalk formed by the gamma and epsilon chains, while a peripheral stalk is formed by the delta, b and b' chains.</text>
</comment>
<comment type="subcellular location">
    <subcellularLocation>
        <location evidence="1">Plastid</location>
        <location evidence="1">Chloroplast thylakoid membrane</location>
        <topology evidence="1">Multi-pass membrane protein</topology>
    </subcellularLocation>
</comment>
<comment type="miscellaneous">
    <text>In plastids the F-type ATPase is also known as CF(1)CF(0).</text>
</comment>
<comment type="similarity">
    <text evidence="1">Belongs to the ATPase C chain family.</text>
</comment>
<name>ATPH_TOBAC</name>
<feature type="chain" id="PRO_0000112206" description="ATP synthase subunit c, chloroplastic">
    <location>
        <begin position="1"/>
        <end position="81"/>
    </location>
</feature>
<feature type="transmembrane region" description="Helical" evidence="1">
    <location>
        <begin position="3"/>
        <end position="23"/>
    </location>
</feature>
<feature type="transmembrane region" description="Helical" evidence="1">
    <location>
        <begin position="57"/>
        <end position="77"/>
    </location>
</feature>
<feature type="site" description="Reversibly protonated during proton transport" evidence="1">
    <location>
        <position position="61"/>
    </location>
</feature>
<sequence length="81" mass="7990">MNPLISAASVIAAGLAVGLASIGPGVGQGTAAGQAVEGIARQPEAEGKIRGTLLLSLAFMEALTIYGLVVALALLFANPFV</sequence>
<accession>P06286</accession>
<evidence type="ECO:0000255" key="1">
    <source>
        <dbReference type="HAMAP-Rule" id="MF_01396"/>
    </source>
</evidence>
<gene>
    <name evidence="1" type="primary">atpH</name>
</gene>
<keyword id="KW-0066">ATP synthesis</keyword>
<keyword id="KW-0138">CF(0)</keyword>
<keyword id="KW-0150">Chloroplast</keyword>
<keyword id="KW-0375">Hydrogen ion transport</keyword>
<keyword id="KW-0406">Ion transport</keyword>
<keyword id="KW-0446">Lipid-binding</keyword>
<keyword id="KW-0472">Membrane</keyword>
<keyword id="KW-0934">Plastid</keyword>
<keyword id="KW-1185">Reference proteome</keyword>
<keyword id="KW-0793">Thylakoid</keyword>
<keyword id="KW-0812">Transmembrane</keyword>
<keyword id="KW-1133">Transmembrane helix</keyword>
<keyword id="KW-0813">Transport</keyword>
<geneLocation type="chloroplast"/>